<organism>
    <name type="scientific">Alkalilimnicola ehrlichii (strain ATCC BAA-1101 / DSM 17681 / MLHE-1)</name>
    <dbReference type="NCBI Taxonomy" id="187272"/>
    <lineage>
        <taxon>Bacteria</taxon>
        <taxon>Pseudomonadati</taxon>
        <taxon>Pseudomonadota</taxon>
        <taxon>Gammaproteobacteria</taxon>
        <taxon>Chromatiales</taxon>
        <taxon>Ectothiorhodospiraceae</taxon>
        <taxon>Alkalilimnicola</taxon>
    </lineage>
</organism>
<proteinExistence type="inferred from homology"/>
<comment type="function">
    <text evidence="1">Involved in the biosynthesis of ADP-glucose, a building block required for the elongation reactions to produce glycogen. Catalyzes the reaction between ATP and alpha-D-glucose 1-phosphate (G1P) to produce pyrophosphate and ADP-Glc.</text>
</comment>
<comment type="catalytic activity">
    <reaction evidence="1">
        <text>alpha-D-glucose 1-phosphate + ATP + H(+) = ADP-alpha-D-glucose + diphosphate</text>
        <dbReference type="Rhea" id="RHEA:12120"/>
        <dbReference type="ChEBI" id="CHEBI:15378"/>
        <dbReference type="ChEBI" id="CHEBI:30616"/>
        <dbReference type="ChEBI" id="CHEBI:33019"/>
        <dbReference type="ChEBI" id="CHEBI:57498"/>
        <dbReference type="ChEBI" id="CHEBI:58601"/>
        <dbReference type="EC" id="2.7.7.27"/>
    </reaction>
</comment>
<comment type="pathway">
    <text evidence="1">Glycan biosynthesis; glycogen biosynthesis.</text>
</comment>
<comment type="subunit">
    <text evidence="1">Homotetramer.</text>
</comment>
<comment type="similarity">
    <text evidence="1">Belongs to the bacterial/plant glucose-1-phosphate adenylyltransferase family.</text>
</comment>
<protein>
    <recommendedName>
        <fullName evidence="1">Glucose-1-phosphate adenylyltransferase 1</fullName>
        <ecNumber evidence="1">2.7.7.27</ecNumber>
    </recommendedName>
    <alternativeName>
        <fullName evidence="1">ADP-glucose pyrophosphorylase 1</fullName>
        <shortName evidence="1">ADPGlc PPase 1</shortName>
    </alternativeName>
    <alternativeName>
        <fullName evidence="1">ADP-glucose synthase 1</fullName>
    </alternativeName>
</protein>
<keyword id="KW-0067">ATP-binding</keyword>
<keyword id="KW-0119">Carbohydrate metabolism</keyword>
<keyword id="KW-0320">Glycogen biosynthesis</keyword>
<keyword id="KW-0321">Glycogen metabolism</keyword>
<keyword id="KW-0547">Nucleotide-binding</keyword>
<keyword id="KW-0548">Nucleotidyltransferase</keyword>
<keyword id="KW-1185">Reference proteome</keyword>
<keyword id="KW-0808">Transferase</keyword>
<dbReference type="EC" id="2.7.7.27" evidence="1"/>
<dbReference type="EMBL" id="CP000453">
    <property type="protein sequence ID" value="ABI56009.1"/>
    <property type="molecule type" value="Genomic_DNA"/>
</dbReference>
<dbReference type="RefSeq" id="WP_011628404.1">
    <property type="nucleotide sequence ID" value="NC_008340.1"/>
</dbReference>
<dbReference type="SMR" id="Q0AAX8"/>
<dbReference type="KEGG" id="aeh:Mlg_0655"/>
<dbReference type="eggNOG" id="COG0448">
    <property type="taxonomic scope" value="Bacteria"/>
</dbReference>
<dbReference type="HOGENOM" id="CLU_029499_14_1_6"/>
<dbReference type="OrthoDB" id="9801810at2"/>
<dbReference type="UniPathway" id="UPA00164"/>
<dbReference type="Proteomes" id="UP000001962">
    <property type="component" value="Chromosome"/>
</dbReference>
<dbReference type="GO" id="GO:0005524">
    <property type="term" value="F:ATP binding"/>
    <property type="evidence" value="ECO:0007669"/>
    <property type="project" value="UniProtKB-KW"/>
</dbReference>
<dbReference type="GO" id="GO:0008878">
    <property type="term" value="F:glucose-1-phosphate adenylyltransferase activity"/>
    <property type="evidence" value="ECO:0007669"/>
    <property type="project" value="UniProtKB-UniRule"/>
</dbReference>
<dbReference type="GO" id="GO:0005978">
    <property type="term" value="P:glycogen biosynthetic process"/>
    <property type="evidence" value="ECO:0007669"/>
    <property type="project" value="UniProtKB-UniRule"/>
</dbReference>
<dbReference type="CDD" id="cd02508">
    <property type="entry name" value="ADP_Glucose_PP"/>
    <property type="match status" value="1"/>
</dbReference>
<dbReference type="CDD" id="cd04651">
    <property type="entry name" value="LbH_G1P_AT_C"/>
    <property type="match status" value="1"/>
</dbReference>
<dbReference type="Gene3D" id="2.160.10.10">
    <property type="entry name" value="Hexapeptide repeat proteins"/>
    <property type="match status" value="1"/>
</dbReference>
<dbReference type="Gene3D" id="3.90.550.10">
    <property type="entry name" value="Spore Coat Polysaccharide Biosynthesis Protein SpsA, Chain A"/>
    <property type="match status" value="1"/>
</dbReference>
<dbReference type="HAMAP" id="MF_00624">
    <property type="entry name" value="GlgC"/>
    <property type="match status" value="1"/>
</dbReference>
<dbReference type="InterPro" id="IPR011831">
    <property type="entry name" value="ADP-Glc_PPase"/>
</dbReference>
<dbReference type="InterPro" id="IPR005836">
    <property type="entry name" value="ADP_Glu_pyroP_CS"/>
</dbReference>
<dbReference type="InterPro" id="IPR023049">
    <property type="entry name" value="GlgC_bac"/>
</dbReference>
<dbReference type="InterPro" id="IPR056818">
    <property type="entry name" value="GlmU/GlgC-like_hexapep"/>
</dbReference>
<dbReference type="InterPro" id="IPR005835">
    <property type="entry name" value="NTP_transferase_dom"/>
</dbReference>
<dbReference type="InterPro" id="IPR029044">
    <property type="entry name" value="Nucleotide-diphossugar_trans"/>
</dbReference>
<dbReference type="InterPro" id="IPR011004">
    <property type="entry name" value="Trimer_LpxA-like_sf"/>
</dbReference>
<dbReference type="NCBIfam" id="TIGR02091">
    <property type="entry name" value="glgC"/>
    <property type="match status" value="1"/>
</dbReference>
<dbReference type="NCBIfam" id="NF001947">
    <property type="entry name" value="PRK00725.1"/>
    <property type="match status" value="1"/>
</dbReference>
<dbReference type="NCBIfam" id="NF002023">
    <property type="entry name" value="PRK00844.1"/>
    <property type="match status" value="1"/>
</dbReference>
<dbReference type="PANTHER" id="PTHR43523:SF2">
    <property type="entry name" value="GLUCOSE-1-PHOSPHATE ADENYLYLTRANSFERASE"/>
    <property type="match status" value="1"/>
</dbReference>
<dbReference type="PANTHER" id="PTHR43523">
    <property type="entry name" value="GLUCOSE-1-PHOSPHATE ADENYLYLTRANSFERASE-RELATED"/>
    <property type="match status" value="1"/>
</dbReference>
<dbReference type="Pfam" id="PF24894">
    <property type="entry name" value="Hexapep_GlmU"/>
    <property type="match status" value="1"/>
</dbReference>
<dbReference type="Pfam" id="PF00483">
    <property type="entry name" value="NTP_transferase"/>
    <property type="match status" value="1"/>
</dbReference>
<dbReference type="SUPFAM" id="SSF53448">
    <property type="entry name" value="Nucleotide-diphospho-sugar transferases"/>
    <property type="match status" value="1"/>
</dbReference>
<dbReference type="SUPFAM" id="SSF51161">
    <property type="entry name" value="Trimeric LpxA-like enzymes"/>
    <property type="match status" value="1"/>
</dbReference>
<dbReference type="PROSITE" id="PS00809">
    <property type="entry name" value="ADP_GLC_PYROPHOSPH_2"/>
    <property type="match status" value="1"/>
</dbReference>
<dbReference type="PROSITE" id="PS00810">
    <property type="entry name" value="ADP_GLC_PYROPHOSPH_3"/>
    <property type="match status" value="1"/>
</dbReference>
<feature type="chain" id="PRO_0000261856" description="Glucose-1-phosphate adenylyltransferase 1">
    <location>
        <begin position="1"/>
        <end position="423"/>
    </location>
</feature>
<feature type="binding site" evidence="1">
    <location>
        <position position="111"/>
    </location>
    <ligand>
        <name>alpha-D-glucose 1-phosphate</name>
        <dbReference type="ChEBI" id="CHEBI:58601"/>
    </ligand>
</feature>
<feature type="binding site" evidence="1">
    <location>
        <position position="176"/>
    </location>
    <ligand>
        <name>alpha-D-glucose 1-phosphate</name>
        <dbReference type="ChEBI" id="CHEBI:58601"/>
    </ligand>
</feature>
<feature type="binding site" evidence="1">
    <location>
        <begin position="191"/>
        <end position="192"/>
    </location>
    <ligand>
        <name>alpha-D-glucose 1-phosphate</name>
        <dbReference type="ChEBI" id="CHEBI:58601"/>
    </ligand>
</feature>
<feature type="binding site" evidence="1">
    <location>
        <position position="209"/>
    </location>
    <ligand>
        <name>alpha-D-glucose 1-phosphate</name>
        <dbReference type="ChEBI" id="CHEBI:58601"/>
    </ligand>
</feature>
<name>GLGC1_ALKEH</name>
<accession>Q0AAX8</accession>
<evidence type="ECO:0000255" key="1">
    <source>
        <dbReference type="HAMAP-Rule" id="MF_00624"/>
    </source>
</evidence>
<sequence>MFLECNPRFVSRLTRDTLALIMAGGRGGRLSNLTDWRTKPAVPFGGKFRLIDFPLSNCINSGIRRIEVLTQYKAHSLIQHIQRGWGFLRGEFGEFVELVPAQQRMDKPLWYAGTADAVYQNIDIIKAHNPSYVLVLAGDHVYKMDYGGMIARHAESGAAMTVGCVEVPRKRASAFGVMSVNEERQVLAFNEKPKDPTPMPGNPDRALVSMGIYVFDRDYLFQLLREDAENFDSSRDFGKDVIPNAIANHKVQAYPFSDPVSGQQAYWRDVGTVDAFFQANMELIGEDPELNLYDEEWPIWTYQAQLPPAKFIQGRDGRHGTAINSMVSGGDIIHGAEVRDSLLFSQVVVQPGATVHEAVILPDVRVGEGCRIRKAVIDEGCRIPAGTVIGEDPAEDRRRFFVTPKDVVLVTAEMLGQEVAHVR</sequence>
<gene>
    <name evidence="1" type="primary">glgC1</name>
    <name type="ordered locus">Mlg_0655</name>
</gene>
<reference key="1">
    <citation type="submission" date="2006-08" db="EMBL/GenBank/DDBJ databases">
        <title>Complete sequence of Alkalilimnicola ehrilichei MLHE-1.</title>
        <authorList>
            <person name="Copeland A."/>
            <person name="Lucas S."/>
            <person name="Lapidus A."/>
            <person name="Barry K."/>
            <person name="Detter J.C."/>
            <person name="Glavina del Rio T."/>
            <person name="Hammon N."/>
            <person name="Israni S."/>
            <person name="Dalin E."/>
            <person name="Tice H."/>
            <person name="Pitluck S."/>
            <person name="Sims D."/>
            <person name="Brettin T."/>
            <person name="Bruce D."/>
            <person name="Han C."/>
            <person name="Tapia R."/>
            <person name="Gilna P."/>
            <person name="Schmutz J."/>
            <person name="Larimer F."/>
            <person name="Land M."/>
            <person name="Hauser L."/>
            <person name="Kyrpides N."/>
            <person name="Mikhailova N."/>
            <person name="Oremland R.S."/>
            <person name="Hoeft S.E."/>
            <person name="Switzer-Blum J."/>
            <person name="Kulp T."/>
            <person name="King G."/>
            <person name="Tabita R."/>
            <person name="Witte B."/>
            <person name="Santini J.M."/>
            <person name="Basu P."/>
            <person name="Hollibaugh J.T."/>
            <person name="Xie G."/>
            <person name="Stolz J.F."/>
            <person name="Richardson P."/>
        </authorList>
    </citation>
    <scope>NUCLEOTIDE SEQUENCE [LARGE SCALE GENOMIC DNA]</scope>
    <source>
        <strain>ATCC BAA-1101 / DSM 17681 / MLHE-1</strain>
    </source>
</reference>